<accession>P0C6E0</accession>
<accession>Q9X4Q5</accession>
<name>NQRC_VIBCH</name>
<comment type="function">
    <text evidence="2">NQR complex catalyzes the reduction of ubiquinone-1 to ubiquinol by two successive reactions, coupled with the transport of Na(+) ions from the cytoplasm to the periplasm. NqrA to NqrE are probably involved in the second step, the conversion of ubisemiquinone to ubiquinol.</text>
</comment>
<comment type="catalytic activity">
    <reaction evidence="2">
        <text>a ubiquinone + n Na(+)(in) + NADH + H(+) = a ubiquinol + n Na(+)(out) + NAD(+)</text>
        <dbReference type="Rhea" id="RHEA:47748"/>
        <dbReference type="Rhea" id="RHEA-COMP:9565"/>
        <dbReference type="Rhea" id="RHEA-COMP:9566"/>
        <dbReference type="ChEBI" id="CHEBI:15378"/>
        <dbReference type="ChEBI" id="CHEBI:16389"/>
        <dbReference type="ChEBI" id="CHEBI:17976"/>
        <dbReference type="ChEBI" id="CHEBI:29101"/>
        <dbReference type="ChEBI" id="CHEBI:57540"/>
        <dbReference type="ChEBI" id="CHEBI:57945"/>
        <dbReference type="EC" id="7.2.1.1"/>
    </reaction>
</comment>
<comment type="cofactor">
    <cofactor evidence="2">
        <name>FMN</name>
        <dbReference type="ChEBI" id="CHEBI:58210"/>
    </cofactor>
</comment>
<comment type="subunit">
    <text evidence="2">Composed of six subunits; NqrA, NqrB, NqrC, NqrD, NqrE and NqrF.</text>
</comment>
<comment type="subcellular location">
    <subcellularLocation>
        <location evidence="2">Cell inner membrane</location>
        <topology evidence="2">Single-pass membrane protein</topology>
    </subcellularLocation>
</comment>
<comment type="similarity">
    <text evidence="2">Belongs to the NqrC family.</text>
</comment>
<proteinExistence type="evidence at protein level"/>
<organism>
    <name type="scientific">Vibrio cholerae serotype O1 (strain ATCC 39315 / El Tor Inaba N16961)</name>
    <dbReference type="NCBI Taxonomy" id="243277"/>
    <lineage>
        <taxon>Bacteria</taxon>
        <taxon>Pseudomonadati</taxon>
        <taxon>Pseudomonadota</taxon>
        <taxon>Gammaproteobacteria</taxon>
        <taxon>Vibrionales</taxon>
        <taxon>Vibrionaceae</taxon>
        <taxon>Vibrio</taxon>
    </lineage>
</organism>
<evidence type="ECO:0000250" key="1"/>
<evidence type="ECO:0000255" key="2">
    <source>
        <dbReference type="HAMAP-Rule" id="MF_00427"/>
    </source>
</evidence>
<evidence type="ECO:0007829" key="3">
    <source>
        <dbReference type="PDB" id="8A1U"/>
    </source>
</evidence>
<keyword id="KW-0002">3D-structure</keyword>
<keyword id="KW-0997">Cell inner membrane</keyword>
<keyword id="KW-1003">Cell membrane</keyword>
<keyword id="KW-0285">Flavoprotein</keyword>
<keyword id="KW-0288">FMN</keyword>
<keyword id="KW-0406">Ion transport</keyword>
<keyword id="KW-0472">Membrane</keyword>
<keyword id="KW-0520">NAD</keyword>
<keyword id="KW-0597">Phosphoprotein</keyword>
<keyword id="KW-1185">Reference proteome</keyword>
<keyword id="KW-0915">Sodium</keyword>
<keyword id="KW-0739">Sodium transport</keyword>
<keyword id="KW-1278">Translocase</keyword>
<keyword id="KW-0812">Transmembrane</keyword>
<keyword id="KW-1133">Transmembrane helix</keyword>
<keyword id="KW-0813">Transport</keyword>
<keyword id="KW-0830">Ubiquinone</keyword>
<reference key="1">
    <citation type="journal article" date="2000" name="Nature">
        <title>DNA sequence of both chromosomes of the cholera pathogen Vibrio cholerae.</title>
        <authorList>
            <person name="Heidelberg J.F."/>
            <person name="Eisen J.A."/>
            <person name="Nelson W.C."/>
            <person name="Clayton R.A."/>
            <person name="Gwinn M.L."/>
            <person name="Dodson R.J."/>
            <person name="Haft D.H."/>
            <person name="Hickey E.K."/>
            <person name="Peterson J.D."/>
            <person name="Umayam L.A."/>
            <person name="Gill S.R."/>
            <person name="Nelson K.E."/>
            <person name="Read T.D."/>
            <person name="Tettelin H."/>
            <person name="Richardson D.L."/>
            <person name="Ermolaeva M.D."/>
            <person name="Vamathevan J.J."/>
            <person name="Bass S."/>
            <person name="Qin H."/>
            <person name="Dragoi I."/>
            <person name="Sellers P."/>
            <person name="McDonald L.A."/>
            <person name="Utterback T.R."/>
            <person name="Fleischmann R.D."/>
            <person name="Nierman W.C."/>
            <person name="White O."/>
            <person name="Salzberg S.L."/>
            <person name="Smith H.O."/>
            <person name="Colwell R.R."/>
            <person name="Mekalanos J.J."/>
            <person name="Venter J.C."/>
            <person name="Fraser C.M."/>
        </authorList>
    </citation>
    <scope>NUCLEOTIDE SEQUENCE [LARGE SCALE GENOMIC DNA]</scope>
    <source>
        <strain>ATCC 39315 / El Tor Inaba N16961</strain>
    </source>
</reference>
<feature type="initiator methionine" description="Removed" evidence="1">
    <location>
        <position position="1"/>
    </location>
</feature>
<feature type="chain" id="PRO_0000214223" description="Na(+)-translocating NADH-quinone reductase subunit C">
    <location>
        <begin position="2"/>
        <end position="257"/>
    </location>
</feature>
<feature type="transmembrane region" description="Helical" evidence="2">
    <location>
        <begin position="12"/>
        <end position="32"/>
    </location>
</feature>
<feature type="modified residue" description="FMN phosphoryl threonine" evidence="2">
    <location>
        <position position="225"/>
    </location>
</feature>
<feature type="helix" evidence="3">
    <location>
        <begin position="8"/>
        <end position="53"/>
    </location>
</feature>
<feature type="helix" evidence="3">
    <location>
        <begin position="60"/>
        <end position="69"/>
    </location>
</feature>
<feature type="strand" evidence="3">
    <location>
        <begin position="71"/>
        <end position="77"/>
    </location>
</feature>
<feature type="turn" evidence="3">
    <location>
        <begin position="78"/>
        <end position="80"/>
    </location>
</feature>
<feature type="helix" evidence="3">
    <location>
        <begin position="93"/>
        <end position="98"/>
    </location>
</feature>
<feature type="turn" evidence="3">
    <location>
        <begin position="100"/>
        <end position="102"/>
    </location>
</feature>
<feature type="strand" evidence="3">
    <location>
        <begin position="103"/>
        <end position="105"/>
    </location>
</feature>
<feature type="turn" evidence="3">
    <location>
        <begin position="108"/>
        <end position="110"/>
    </location>
</feature>
<feature type="strand" evidence="3">
    <location>
        <begin position="116"/>
        <end position="143"/>
    </location>
</feature>
<feature type="strand" evidence="3">
    <location>
        <begin position="145"/>
        <end position="156"/>
    </location>
</feature>
<feature type="strand" evidence="3">
    <location>
        <begin position="162"/>
        <end position="169"/>
    </location>
</feature>
<feature type="turn" evidence="3">
    <location>
        <begin position="174"/>
        <end position="177"/>
    </location>
</feature>
<feature type="helix" evidence="3">
    <location>
        <begin position="178"/>
        <end position="181"/>
    </location>
</feature>
<feature type="helix" evidence="3">
    <location>
        <begin position="183"/>
        <end position="188"/>
    </location>
</feature>
<feature type="turn" evidence="3">
    <location>
        <begin position="189"/>
        <end position="191"/>
    </location>
</feature>
<feature type="strand" evidence="3">
    <location>
        <begin position="199"/>
        <end position="201"/>
    </location>
</feature>
<feature type="strand" evidence="3">
    <location>
        <begin position="204"/>
        <end position="206"/>
    </location>
</feature>
<feature type="strand" evidence="3">
    <location>
        <begin position="215"/>
        <end position="219"/>
    </location>
</feature>
<feature type="helix" evidence="3">
    <location>
        <begin position="225"/>
        <end position="238"/>
    </location>
</feature>
<feature type="turn" evidence="3">
    <location>
        <begin position="241"/>
        <end position="244"/>
    </location>
</feature>
<feature type="helix" evidence="3">
    <location>
        <begin position="245"/>
        <end position="252"/>
    </location>
</feature>
<sequence>MASNNDSIKKTLFVVIALSLVCSIIVSAAAVGLRDKQKENAALDKQSKILQVAGIEAKGSKQIVELFNKSIEPRLVDFNTGDFVEGDAANYDQRKAAKEASESIKLTAEQDKAKIQRRANVGVVYLVKDGDKTSKVILPVHGNGLWSMMYAFVAVETDGNTVSGLTYYEQGETPGLGGEVENPAWRAQWVGKKLFDENHKPAIKIVKGGAPQGSEHGVDGLSGATLTSNGVQNTFDFWLGDMGFGPFLTKVRDGGLN</sequence>
<dbReference type="EC" id="7.2.1.1" evidence="2"/>
<dbReference type="EMBL" id="AE003852">
    <property type="protein sequence ID" value="AAF95437.1"/>
    <property type="molecule type" value="Genomic_DNA"/>
</dbReference>
<dbReference type="PIR" id="E82094">
    <property type="entry name" value="E82094"/>
</dbReference>
<dbReference type="RefSeq" id="NP_231924.1">
    <property type="nucleotide sequence ID" value="NC_002505.1"/>
</dbReference>
<dbReference type="RefSeq" id="WP_000157902.1">
    <property type="nucleotide sequence ID" value="NZ_LT906614.1"/>
</dbReference>
<dbReference type="PDB" id="8A1U">
    <property type="method" value="EM"/>
    <property type="resolution" value="2.86 A"/>
    <property type="chains" value="C=1-257"/>
</dbReference>
<dbReference type="PDB" id="8ACY">
    <property type="method" value="X-ray"/>
    <property type="resolution" value="3.50 A"/>
    <property type="chains" value="C=1-257"/>
</dbReference>
<dbReference type="PDB" id="8EVU">
    <property type="method" value="EM"/>
    <property type="resolution" value="2.58 A"/>
    <property type="chains" value="C=1-257"/>
</dbReference>
<dbReference type="PDBsum" id="8A1U"/>
<dbReference type="PDBsum" id="8ACY"/>
<dbReference type="PDBsum" id="8EVU"/>
<dbReference type="EMDB" id="EMD-15089"/>
<dbReference type="EMDB" id="EMD-28637"/>
<dbReference type="SMR" id="P0C6E0"/>
<dbReference type="DIP" id="DIP-61339N"/>
<dbReference type="IntAct" id="P0C6E0">
    <property type="interactions" value="1"/>
</dbReference>
<dbReference type="STRING" id="243277.VC_2293"/>
<dbReference type="DNASU" id="2613215"/>
<dbReference type="EnsemblBacteria" id="AAF95437">
    <property type="protein sequence ID" value="AAF95437"/>
    <property type="gene ID" value="VC_2293"/>
</dbReference>
<dbReference type="KEGG" id="vch:VC_2293"/>
<dbReference type="PATRIC" id="fig|243277.26.peg.2187"/>
<dbReference type="eggNOG" id="COG2869">
    <property type="taxonomic scope" value="Bacteria"/>
</dbReference>
<dbReference type="HOGENOM" id="CLU_077882_0_1_6"/>
<dbReference type="BioCyc" id="MetaCyc:MONOMER-16199"/>
<dbReference type="BRENDA" id="7.2.1.1">
    <property type="organism ID" value="15862"/>
</dbReference>
<dbReference type="Proteomes" id="UP000000584">
    <property type="component" value="Chromosome 1"/>
</dbReference>
<dbReference type="GO" id="GO:0005886">
    <property type="term" value="C:plasma membrane"/>
    <property type="evidence" value="ECO:0007669"/>
    <property type="project" value="UniProtKB-SubCell"/>
</dbReference>
<dbReference type="GO" id="GO:0010181">
    <property type="term" value="F:FMN binding"/>
    <property type="evidence" value="ECO:0007669"/>
    <property type="project" value="UniProtKB-UniRule"/>
</dbReference>
<dbReference type="GO" id="GO:0016655">
    <property type="term" value="F:oxidoreductase activity, acting on NAD(P)H, quinone or similar compound as acceptor"/>
    <property type="evidence" value="ECO:0007669"/>
    <property type="project" value="UniProtKB-UniRule"/>
</dbReference>
<dbReference type="GO" id="GO:0006814">
    <property type="term" value="P:sodium ion transport"/>
    <property type="evidence" value="ECO:0007669"/>
    <property type="project" value="UniProtKB-UniRule"/>
</dbReference>
<dbReference type="HAMAP" id="MF_00427">
    <property type="entry name" value="NqrC"/>
    <property type="match status" value="1"/>
</dbReference>
<dbReference type="InterPro" id="IPR007329">
    <property type="entry name" value="FMN-bd"/>
</dbReference>
<dbReference type="InterPro" id="IPR010204">
    <property type="entry name" value="NqrC"/>
</dbReference>
<dbReference type="NCBIfam" id="TIGR01938">
    <property type="entry name" value="nqrC"/>
    <property type="match status" value="1"/>
</dbReference>
<dbReference type="NCBIfam" id="NF003746">
    <property type="entry name" value="PRK05346.1-1"/>
    <property type="match status" value="1"/>
</dbReference>
<dbReference type="NCBIfam" id="NF003749">
    <property type="entry name" value="PRK05346.1-5"/>
    <property type="match status" value="1"/>
</dbReference>
<dbReference type="PANTHER" id="PTHR37838">
    <property type="entry name" value="NA(+)-TRANSLOCATING NADH-QUINONE REDUCTASE SUBUNIT C"/>
    <property type="match status" value="1"/>
</dbReference>
<dbReference type="PANTHER" id="PTHR37838:SF1">
    <property type="entry name" value="NA(+)-TRANSLOCATING NADH-QUINONE REDUCTASE SUBUNIT C"/>
    <property type="match status" value="1"/>
</dbReference>
<dbReference type="Pfam" id="PF04205">
    <property type="entry name" value="FMN_bind"/>
    <property type="match status" value="1"/>
</dbReference>
<dbReference type="PIRSF" id="PIRSF009437">
    <property type="entry name" value="NQR-1_subunit_C"/>
    <property type="match status" value="1"/>
</dbReference>
<dbReference type="SMART" id="SM00900">
    <property type="entry name" value="FMN_bind"/>
    <property type="match status" value="1"/>
</dbReference>
<gene>
    <name evidence="2" type="primary">nqrC</name>
    <name type="ordered locus">VC_2293</name>
</gene>
<protein>
    <recommendedName>
        <fullName evidence="2">Na(+)-translocating NADH-quinone reductase subunit C</fullName>
        <shortName evidence="2">Na(+)-NQR subunit C</shortName>
        <shortName evidence="2">Na(+)-translocating NQR subunit C</shortName>
        <ecNumber evidence="2">7.2.1.1</ecNumber>
    </recommendedName>
    <alternativeName>
        <fullName evidence="2">NQR complex subunit C</fullName>
    </alternativeName>
    <alternativeName>
        <fullName evidence="2">NQR-1 subunit C</fullName>
    </alternativeName>
</protein>